<evidence type="ECO:0000250" key="1">
    <source>
        <dbReference type="UniProtKB" id="Q9H5U6"/>
    </source>
</evidence>
<evidence type="ECO:0000255" key="2">
    <source>
        <dbReference type="PROSITE-ProRule" id="PRU00067"/>
    </source>
</evidence>
<evidence type="ECO:0000255" key="3">
    <source>
        <dbReference type="PROSITE-ProRule" id="PRU01343"/>
    </source>
</evidence>
<evidence type="ECO:0000303" key="4">
    <source>
    </source>
</evidence>
<evidence type="ECO:0000305" key="5"/>
<evidence type="ECO:0000312" key="6">
    <source>
        <dbReference type="MGI" id="MGI:1926046"/>
    </source>
</evidence>
<keyword id="KW-0025">Alternative splicing</keyword>
<keyword id="KW-0963">Cytoplasm</keyword>
<keyword id="KW-0479">Metal-binding</keyword>
<keyword id="KW-0489">Methyltransferase</keyword>
<keyword id="KW-0539">Nucleus</keyword>
<keyword id="KW-1185">Reference proteome</keyword>
<keyword id="KW-0949">S-adenosyl-L-methionine</keyword>
<keyword id="KW-0808">Transferase</keyword>
<keyword id="KW-0862">Zinc</keyword>
<keyword id="KW-0863">Zinc-finger</keyword>
<organism>
    <name type="scientific">Mus musculus</name>
    <name type="common">Mouse</name>
    <dbReference type="NCBI Taxonomy" id="10090"/>
    <lineage>
        <taxon>Eukaryota</taxon>
        <taxon>Metazoa</taxon>
        <taxon>Chordata</taxon>
        <taxon>Craniata</taxon>
        <taxon>Vertebrata</taxon>
        <taxon>Euteleostomi</taxon>
        <taxon>Mammalia</taxon>
        <taxon>Eutheria</taxon>
        <taxon>Euarchontoglires</taxon>
        <taxon>Glires</taxon>
        <taxon>Rodentia</taxon>
        <taxon>Myomorpha</taxon>
        <taxon>Muroidea</taxon>
        <taxon>Muridae</taxon>
        <taxon>Murinae</taxon>
        <taxon>Mus</taxon>
        <taxon>Mus</taxon>
    </lineage>
</organism>
<accession>Q8BKW4</accession>
<accession>Q3UTX6</accession>
<accession>Q9D2I1</accession>
<feature type="chain" id="PRO_0000150953" description="rRNA N(6)-adenosine-methyltransferase ZCCHC4">
    <location>
        <begin position="1"/>
        <end position="512"/>
    </location>
</feature>
<feature type="domain" description="DHHC" evidence="2">
    <location>
        <begin position="393"/>
        <end position="445"/>
    </location>
</feature>
<feature type="zinc finger region" description="GRF-type" evidence="3">
    <location>
        <begin position="39"/>
        <end position="81"/>
    </location>
</feature>
<feature type="zinc finger region" description="CCHC-type">
    <location>
        <begin position="441"/>
        <end position="458"/>
    </location>
</feature>
<feature type="region of interest" description="Regulatory loop" evidence="1">
    <location>
        <begin position="335"/>
        <end position="355"/>
    </location>
</feature>
<feature type="binding site" evidence="3">
    <location>
        <position position="39"/>
    </location>
    <ligand>
        <name>Zn(2+)</name>
        <dbReference type="ChEBI" id="CHEBI:29105"/>
        <label>1</label>
    </ligand>
</feature>
<feature type="binding site" evidence="3">
    <location>
        <position position="41"/>
    </location>
    <ligand>
        <name>Zn(2+)</name>
        <dbReference type="ChEBI" id="CHEBI:29105"/>
        <label>1</label>
    </ligand>
</feature>
<feature type="binding site" evidence="3">
    <location>
        <position position="63"/>
    </location>
    <ligand>
        <name>Zn(2+)</name>
        <dbReference type="ChEBI" id="CHEBI:29105"/>
        <label>1</label>
    </ligand>
</feature>
<feature type="binding site" evidence="3">
    <location>
        <position position="72"/>
    </location>
    <ligand>
        <name>Zn(2+)</name>
        <dbReference type="ChEBI" id="CHEBI:29105"/>
        <label>1</label>
    </ligand>
</feature>
<feature type="binding site" evidence="1">
    <location>
        <position position="124"/>
    </location>
    <ligand>
        <name>Zn(2+)</name>
        <dbReference type="ChEBI" id="CHEBI:29105"/>
        <label>2</label>
    </ligand>
</feature>
<feature type="binding site" evidence="1">
    <location>
        <position position="127"/>
    </location>
    <ligand>
        <name>Zn(2+)</name>
        <dbReference type="ChEBI" id="CHEBI:29105"/>
        <label>2</label>
    </ligand>
</feature>
<feature type="binding site" evidence="1">
    <location>
        <position position="139"/>
    </location>
    <ligand>
        <name>Zn(2+)</name>
        <dbReference type="ChEBI" id="CHEBI:29105"/>
        <label>2</label>
    </ligand>
</feature>
<feature type="binding site" evidence="1">
    <location>
        <position position="142"/>
    </location>
    <ligand>
        <name>Zn(2+)</name>
        <dbReference type="ChEBI" id="CHEBI:29105"/>
        <label>2</label>
    </ligand>
</feature>
<feature type="binding site" evidence="1">
    <location>
        <begin position="171"/>
        <end position="174"/>
    </location>
    <ligand>
        <name>S-adenosyl-L-methionine</name>
        <dbReference type="ChEBI" id="CHEBI:59789"/>
    </ligand>
</feature>
<feature type="binding site" evidence="1">
    <location>
        <position position="201"/>
    </location>
    <ligand>
        <name>S-adenosyl-L-methionine</name>
        <dbReference type="ChEBI" id="CHEBI:59789"/>
    </ligand>
</feature>
<feature type="binding site" evidence="1">
    <location>
        <position position="223"/>
    </location>
    <ligand>
        <name>S-adenosyl-L-methionine</name>
        <dbReference type="ChEBI" id="CHEBI:59789"/>
    </ligand>
</feature>
<feature type="binding site" evidence="1">
    <location>
        <begin position="241"/>
        <end position="242"/>
    </location>
    <ligand>
        <name>S-adenosyl-L-methionine</name>
        <dbReference type="ChEBI" id="CHEBI:59789"/>
    </ligand>
</feature>
<feature type="binding site" evidence="1">
    <location>
        <position position="274"/>
    </location>
    <ligand>
        <name>S-adenosyl-L-methionine</name>
        <dbReference type="ChEBI" id="CHEBI:59789"/>
    </ligand>
</feature>
<feature type="binding site" evidence="1">
    <location>
        <position position="378"/>
    </location>
    <ligand>
        <name>Zn(2+)</name>
        <dbReference type="ChEBI" id="CHEBI:29105"/>
        <label>3</label>
    </ligand>
</feature>
<feature type="binding site" evidence="1">
    <location>
        <position position="381"/>
    </location>
    <ligand>
        <name>Zn(2+)</name>
        <dbReference type="ChEBI" id="CHEBI:29105"/>
        <label>3</label>
    </ligand>
</feature>
<feature type="binding site" evidence="1">
    <location>
        <position position="391"/>
    </location>
    <ligand>
        <name>Zn(2+)</name>
        <dbReference type="ChEBI" id="CHEBI:29105"/>
        <label>3</label>
    </ligand>
</feature>
<feature type="binding site" evidence="1">
    <location>
        <position position="392"/>
    </location>
    <ligand>
        <name>Zn(2+)</name>
        <dbReference type="ChEBI" id="CHEBI:29105"/>
        <label>4</label>
    </ligand>
</feature>
<feature type="binding site" evidence="1">
    <location>
        <position position="395"/>
    </location>
    <ligand>
        <name>Zn(2+)</name>
        <dbReference type="ChEBI" id="CHEBI:29105"/>
        <label>4</label>
    </ligand>
</feature>
<feature type="binding site" evidence="1">
    <location>
        <position position="398"/>
    </location>
    <ligand>
        <name>Zn(2+)</name>
        <dbReference type="ChEBI" id="CHEBI:29105"/>
        <label>3</label>
    </ligand>
</feature>
<feature type="binding site" evidence="1">
    <location>
        <position position="408"/>
    </location>
    <ligand>
        <name>Zn(2+)</name>
        <dbReference type="ChEBI" id="CHEBI:29105"/>
        <label>4</label>
    </ligand>
</feature>
<feature type="binding site" evidence="1">
    <location>
        <position position="409"/>
    </location>
    <ligand>
        <name>Zn(2+)</name>
        <dbReference type="ChEBI" id="CHEBI:29105"/>
        <label>5</label>
    </ligand>
</feature>
<feature type="binding site" evidence="1">
    <location>
        <position position="412"/>
    </location>
    <ligand>
        <name>Zn(2+)</name>
        <dbReference type="ChEBI" id="CHEBI:29105"/>
        <label>5</label>
    </ligand>
</feature>
<feature type="binding site" evidence="1">
    <location>
        <position position="415"/>
    </location>
    <ligand>
        <name>Zn(2+)</name>
        <dbReference type="ChEBI" id="CHEBI:29105"/>
        <label>4</label>
    </ligand>
</feature>
<feature type="binding site" evidence="1">
    <location>
        <position position="422"/>
    </location>
    <ligand>
        <name>Zn(2+)</name>
        <dbReference type="ChEBI" id="CHEBI:29105"/>
        <label>5</label>
    </ligand>
</feature>
<feature type="binding site" evidence="1">
    <location>
        <position position="423"/>
    </location>
    <ligand>
        <name>Zn(2+)</name>
        <dbReference type="ChEBI" id="CHEBI:29105"/>
        <label>6</label>
    </ligand>
</feature>
<feature type="binding site" evidence="1">
    <location>
        <position position="426"/>
    </location>
    <ligand>
        <name>Zn(2+)</name>
        <dbReference type="ChEBI" id="CHEBI:29105"/>
        <label>6</label>
    </ligand>
</feature>
<feature type="binding site" evidence="1">
    <location>
        <position position="429"/>
    </location>
    <ligand>
        <name>Zn(2+)</name>
        <dbReference type="ChEBI" id="CHEBI:29105"/>
        <label>5</label>
    </ligand>
</feature>
<feature type="binding site" evidence="1">
    <location>
        <position position="434"/>
    </location>
    <ligand>
        <name>Zn(2+)</name>
        <dbReference type="ChEBI" id="CHEBI:29105"/>
        <label>6</label>
    </ligand>
</feature>
<feature type="binding site" evidence="1">
    <location>
        <position position="436"/>
    </location>
    <ligand>
        <name>Zn(2+)</name>
        <dbReference type="ChEBI" id="CHEBI:29105"/>
        <label>6</label>
    </ligand>
</feature>
<feature type="splice variant" id="VSP_017013" description="In isoform 2." evidence="4">
    <original>LVEFFGFLEKRLLMSSFLGAIYRSTKLSEDSEFFRVLNRSSHHYV</original>
    <variation>AVRKQKQRKRNKIRREALKDNP</variation>
    <location>
        <begin position="468"/>
        <end position="512"/>
    </location>
</feature>
<sequence length="512" mass="58567">MAAPMDCLESLEGDGDAGRRASGVEVALPSNPTAPAPLCPHGPTLLFVKVNQGKEETRKFYACSACRDRKDCNFFQWEDEKLSEARLAAREIHNQKCQPPLSRAQCIERYLSFIQLPLAQRKFCQSCQQLLLPADWREHGTHQLSADISVAQLGRPSQLLYPLENKKTHAQYLFADRSCQFLAGLLATLGFSRVLCVGAPRLHEQIRLTASGERSGMRSLLLDIDFRYSQFYLEGSFCRYNMFNHHFFDGKAALEVCKEFLQEEEGKGVIMVTDPPFGGLVEPLAITFKKLIAMWKEGQSQDDSHKELPIFWIFPYFFESRICQFFPSFCMLDYQVDYDNHALYKHGKTGRKQSPVRIFTNVPPNKIILPSEEGYRFCSLCQRYVSRENQHCVHCNSCTSKDGRKWSHCFLCKKCVKPSWIHCNTCNRCALPDHSCLGPKDGCFICGALDHKRSNCPNIGTSWRANKLVEFFGFLEKRLLMSSFLGAIYRSTKLSEDSEFFRVLNRSSHHYV</sequence>
<gene>
    <name evidence="6" type="primary">Zcchc4</name>
</gene>
<proteinExistence type="evidence at transcript level"/>
<protein>
    <recommendedName>
        <fullName evidence="5">rRNA N(6)-adenosine-methyltransferase ZCCHC4</fullName>
        <ecNumber evidence="1">2.1.1.-</ecNumber>
    </recommendedName>
    <alternativeName>
        <fullName evidence="5">Zinc finger CCHC domain-containing protein 4</fullName>
    </alternativeName>
</protein>
<reference key="1">
    <citation type="journal article" date="2005" name="Science">
        <title>The transcriptional landscape of the mammalian genome.</title>
        <authorList>
            <person name="Carninci P."/>
            <person name="Kasukawa T."/>
            <person name="Katayama S."/>
            <person name="Gough J."/>
            <person name="Frith M.C."/>
            <person name="Maeda N."/>
            <person name="Oyama R."/>
            <person name="Ravasi T."/>
            <person name="Lenhard B."/>
            <person name="Wells C."/>
            <person name="Kodzius R."/>
            <person name="Shimokawa K."/>
            <person name="Bajic V.B."/>
            <person name="Brenner S.E."/>
            <person name="Batalov S."/>
            <person name="Forrest A.R."/>
            <person name="Zavolan M."/>
            <person name="Davis M.J."/>
            <person name="Wilming L.G."/>
            <person name="Aidinis V."/>
            <person name="Allen J.E."/>
            <person name="Ambesi-Impiombato A."/>
            <person name="Apweiler R."/>
            <person name="Aturaliya R.N."/>
            <person name="Bailey T.L."/>
            <person name="Bansal M."/>
            <person name="Baxter L."/>
            <person name="Beisel K.W."/>
            <person name="Bersano T."/>
            <person name="Bono H."/>
            <person name="Chalk A.M."/>
            <person name="Chiu K.P."/>
            <person name="Choudhary V."/>
            <person name="Christoffels A."/>
            <person name="Clutterbuck D.R."/>
            <person name="Crowe M.L."/>
            <person name="Dalla E."/>
            <person name="Dalrymple B.P."/>
            <person name="de Bono B."/>
            <person name="Della Gatta G."/>
            <person name="di Bernardo D."/>
            <person name="Down T."/>
            <person name="Engstrom P."/>
            <person name="Fagiolini M."/>
            <person name="Faulkner G."/>
            <person name="Fletcher C.F."/>
            <person name="Fukushima T."/>
            <person name="Furuno M."/>
            <person name="Futaki S."/>
            <person name="Gariboldi M."/>
            <person name="Georgii-Hemming P."/>
            <person name="Gingeras T.R."/>
            <person name="Gojobori T."/>
            <person name="Green R.E."/>
            <person name="Gustincich S."/>
            <person name="Harbers M."/>
            <person name="Hayashi Y."/>
            <person name="Hensch T.K."/>
            <person name="Hirokawa N."/>
            <person name="Hill D."/>
            <person name="Huminiecki L."/>
            <person name="Iacono M."/>
            <person name="Ikeo K."/>
            <person name="Iwama A."/>
            <person name="Ishikawa T."/>
            <person name="Jakt M."/>
            <person name="Kanapin A."/>
            <person name="Katoh M."/>
            <person name="Kawasawa Y."/>
            <person name="Kelso J."/>
            <person name="Kitamura H."/>
            <person name="Kitano H."/>
            <person name="Kollias G."/>
            <person name="Krishnan S.P."/>
            <person name="Kruger A."/>
            <person name="Kummerfeld S.K."/>
            <person name="Kurochkin I.V."/>
            <person name="Lareau L.F."/>
            <person name="Lazarevic D."/>
            <person name="Lipovich L."/>
            <person name="Liu J."/>
            <person name="Liuni S."/>
            <person name="McWilliam S."/>
            <person name="Madan Babu M."/>
            <person name="Madera M."/>
            <person name="Marchionni L."/>
            <person name="Matsuda H."/>
            <person name="Matsuzawa S."/>
            <person name="Miki H."/>
            <person name="Mignone F."/>
            <person name="Miyake S."/>
            <person name="Morris K."/>
            <person name="Mottagui-Tabar S."/>
            <person name="Mulder N."/>
            <person name="Nakano N."/>
            <person name="Nakauchi H."/>
            <person name="Ng P."/>
            <person name="Nilsson R."/>
            <person name="Nishiguchi S."/>
            <person name="Nishikawa S."/>
            <person name="Nori F."/>
            <person name="Ohara O."/>
            <person name="Okazaki Y."/>
            <person name="Orlando V."/>
            <person name="Pang K.C."/>
            <person name="Pavan W.J."/>
            <person name="Pavesi G."/>
            <person name="Pesole G."/>
            <person name="Petrovsky N."/>
            <person name="Piazza S."/>
            <person name="Reed J."/>
            <person name="Reid J.F."/>
            <person name="Ring B.Z."/>
            <person name="Ringwald M."/>
            <person name="Rost B."/>
            <person name="Ruan Y."/>
            <person name="Salzberg S.L."/>
            <person name="Sandelin A."/>
            <person name="Schneider C."/>
            <person name="Schoenbach C."/>
            <person name="Sekiguchi K."/>
            <person name="Semple C.A."/>
            <person name="Seno S."/>
            <person name="Sessa L."/>
            <person name="Sheng Y."/>
            <person name="Shibata Y."/>
            <person name="Shimada H."/>
            <person name="Shimada K."/>
            <person name="Silva D."/>
            <person name="Sinclair B."/>
            <person name="Sperling S."/>
            <person name="Stupka E."/>
            <person name="Sugiura K."/>
            <person name="Sultana R."/>
            <person name="Takenaka Y."/>
            <person name="Taki K."/>
            <person name="Tammoja K."/>
            <person name="Tan S.L."/>
            <person name="Tang S."/>
            <person name="Taylor M.S."/>
            <person name="Tegner J."/>
            <person name="Teichmann S.A."/>
            <person name="Ueda H.R."/>
            <person name="van Nimwegen E."/>
            <person name="Verardo R."/>
            <person name="Wei C.L."/>
            <person name="Yagi K."/>
            <person name="Yamanishi H."/>
            <person name="Zabarovsky E."/>
            <person name="Zhu S."/>
            <person name="Zimmer A."/>
            <person name="Hide W."/>
            <person name="Bult C."/>
            <person name="Grimmond S.M."/>
            <person name="Teasdale R.D."/>
            <person name="Liu E.T."/>
            <person name="Brusic V."/>
            <person name="Quackenbush J."/>
            <person name="Wahlestedt C."/>
            <person name="Mattick J.S."/>
            <person name="Hume D.A."/>
            <person name="Kai C."/>
            <person name="Sasaki D."/>
            <person name="Tomaru Y."/>
            <person name="Fukuda S."/>
            <person name="Kanamori-Katayama M."/>
            <person name="Suzuki M."/>
            <person name="Aoki J."/>
            <person name="Arakawa T."/>
            <person name="Iida J."/>
            <person name="Imamura K."/>
            <person name="Itoh M."/>
            <person name="Kato T."/>
            <person name="Kawaji H."/>
            <person name="Kawagashira N."/>
            <person name="Kawashima T."/>
            <person name="Kojima M."/>
            <person name="Kondo S."/>
            <person name="Konno H."/>
            <person name="Nakano K."/>
            <person name="Ninomiya N."/>
            <person name="Nishio T."/>
            <person name="Okada M."/>
            <person name="Plessy C."/>
            <person name="Shibata K."/>
            <person name="Shiraki T."/>
            <person name="Suzuki S."/>
            <person name="Tagami M."/>
            <person name="Waki K."/>
            <person name="Watahiki A."/>
            <person name="Okamura-Oho Y."/>
            <person name="Suzuki H."/>
            <person name="Kawai J."/>
            <person name="Hayashizaki Y."/>
        </authorList>
    </citation>
    <scope>NUCLEOTIDE SEQUENCE [LARGE SCALE MRNA] (ISOFORMS 1 AND 2)</scope>
    <source>
        <strain>C57BL/6J</strain>
        <tissue>Aorta</tissue>
        <tissue>Vein</tissue>
    </source>
</reference>
<dbReference type="EC" id="2.1.1.-" evidence="1"/>
<dbReference type="EMBL" id="AK019621">
    <property type="protein sequence ID" value="BAB31816.1"/>
    <property type="molecule type" value="mRNA"/>
</dbReference>
<dbReference type="EMBL" id="AK049511">
    <property type="protein sequence ID" value="BAC33785.1"/>
    <property type="molecule type" value="mRNA"/>
</dbReference>
<dbReference type="EMBL" id="AK138997">
    <property type="protein sequence ID" value="BAE23854.1"/>
    <property type="molecule type" value="mRNA"/>
</dbReference>
<dbReference type="CCDS" id="CCDS39087.1">
    <molecule id="Q8BKW4-1"/>
</dbReference>
<dbReference type="CCDS" id="CCDS80282.1">
    <molecule id="Q8BKW4-2"/>
</dbReference>
<dbReference type="RefSeq" id="NP_001295073.1">
    <molecule id="Q8BKW4-2"/>
    <property type="nucleotide sequence ID" value="NM_001308144.1"/>
</dbReference>
<dbReference type="RefSeq" id="NP_001296374.1">
    <property type="nucleotide sequence ID" value="NM_001309445.1"/>
</dbReference>
<dbReference type="RefSeq" id="NP_084461.1">
    <molecule id="Q8BKW4-1"/>
    <property type="nucleotide sequence ID" value="NM_030185.3"/>
</dbReference>
<dbReference type="SMR" id="Q8BKW4"/>
<dbReference type="BioGRID" id="219639">
    <property type="interactions" value="1"/>
</dbReference>
<dbReference type="FunCoup" id="Q8BKW4">
    <property type="interactions" value="3746"/>
</dbReference>
<dbReference type="STRING" id="10090.ENSMUSP00000031077"/>
<dbReference type="PhosphoSitePlus" id="Q8BKW4"/>
<dbReference type="PaxDb" id="10090-ENSMUSP00000031077"/>
<dbReference type="PeptideAtlas" id="Q8BKW4"/>
<dbReference type="ProteomicsDB" id="275058">
    <molecule id="Q8BKW4-1"/>
</dbReference>
<dbReference type="ProteomicsDB" id="275059">
    <molecule id="Q8BKW4-2"/>
</dbReference>
<dbReference type="Pumba" id="Q8BKW4"/>
<dbReference type="Antibodypedia" id="23199">
    <property type="antibodies" value="74 antibodies from 14 providers"/>
</dbReference>
<dbReference type="Ensembl" id="ENSMUST00000031077.13">
    <molecule id="Q8BKW4-1"/>
    <property type="protein sequence ID" value="ENSMUSP00000031077.9"/>
    <property type="gene ID" value="ENSMUSG00000029179.15"/>
</dbReference>
<dbReference type="Ensembl" id="ENSMUST00000113904.9">
    <molecule id="Q8BKW4-2"/>
    <property type="protein sequence ID" value="ENSMUSP00000109537.3"/>
    <property type="gene ID" value="ENSMUSG00000029179.15"/>
</dbReference>
<dbReference type="GeneID" id="78796"/>
<dbReference type="KEGG" id="mmu:78796"/>
<dbReference type="UCSC" id="uc008xku.1">
    <molecule id="Q8BKW4-1"/>
    <property type="organism name" value="mouse"/>
</dbReference>
<dbReference type="UCSC" id="uc008xkv.1">
    <molecule id="Q8BKW4-2"/>
    <property type="organism name" value="mouse"/>
</dbReference>
<dbReference type="AGR" id="MGI:1926046"/>
<dbReference type="CTD" id="29063"/>
<dbReference type="MGI" id="MGI:1926046">
    <property type="gene designation" value="Zcchc4"/>
</dbReference>
<dbReference type="VEuPathDB" id="HostDB:ENSMUSG00000029179"/>
<dbReference type="eggNOG" id="KOG4399">
    <property type="taxonomic scope" value="Eukaryota"/>
</dbReference>
<dbReference type="GeneTree" id="ENSGT00390000012556"/>
<dbReference type="HOGENOM" id="CLU_034589_0_0_1"/>
<dbReference type="InParanoid" id="Q8BKW4"/>
<dbReference type="OMA" id="FPYFMEH"/>
<dbReference type="OrthoDB" id="431817at2759"/>
<dbReference type="PhylomeDB" id="Q8BKW4"/>
<dbReference type="TreeFam" id="TF313872"/>
<dbReference type="BioGRID-ORCS" id="78796">
    <property type="hits" value="3 hits in 74 CRISPR screens"/>
</dbReference>
<dbReference type="ChiTaRS" id="Zcchc4">
    <property type="organism name" value="mouse"/>
</dbReference>
<dbReference type="PRO" id="PR:Q8BKW4"/>
<dbReference type="Proteomes" id="UP000000589">
    <property type="component" value="Chromosome 5"/>
</dbReference>
<dbReference type="RNAct" id="Q8BKW4">
    <property type="molecule type" value="protein"/>
</dbReference>
<dbReference type="Bgee" id="ENSMUSG00000029179">
    <property type="expression patterns" value="Expressed in ectoplacental cone and 187 other cell types or tissues"/>
</dbReference>
<dbReference type="ExpressionAtlas" id="Q8BKW4">
    <property type="expression patterns" value="baseline and differential"/>
</dbReference>
<dbReference type="GO" id="GO:0005737">
    <property type="term" value="C:cytoplasm"/>
    <property type="evidence" value="ECO:0000250"/>
    <property type="project" value="UniProtKB"/>
</dbReference>
<dbReference type="GO" id="GO:0005730">
    <property type="term" value="C:nucleolus"/>
    <property type="evidence" value="ECO:0000250"/>
    <property type="project" value="UniProtKB"/>
</dbReference>
<dbReference type="GO" id="GO:0003676">
    <property type="term" value="F:nucleic acid binding"/>
    <property type="evidence" value="ECO:0007669"/>
    <property type="project" value="InterPro"/>
</dbReference>
<dbReference type="GO" id="GO:0008988">
    <property type="term" value="F:rRNA (adenine-N6-)-methyltransferase activity"/>
    <property type="evidence" value="ECO:0000250"/>
    <property type="project" value="UniProtKB"/>
</dbReference>
<dbReference type="GO" id="GO:1904047">
    <property type="term" value="F:S-adenosyl-L-methionine binding"/>
    <property type="evidence" value="ECO:0000250"/>
    <property type="project" value="UniProtKB"/>
</dbReference>
<dbReference type="GO" id="GO:0008270">
    <property type="term" value="F:zinc ion binding"/>
    <property type="evidence" value="ECO:0000250"/>
    <property type="project" value="UniProtKB"/>
</dbReference>
<dbReference type="GO" id="GO:0045727">
    <property type="term" value="P:positive regulation of translation"/>
    <property type="evidence" value="ECO:0000250"/>
    <property type="project" value="UniProtKB"/>
</dbReference>
<dbReference type="GO" id="GO:0031167">
    <property type="term" value="P:rRNA methylation"/>
    <property type="evidence" value="ECO:0000250"/>
    <property type="project" value="UniProtKB"/>
</dbReference>
<dbReference type="InterPro" id="IPR002052">
    <property type="entry name" value="DNA_methylase_N6_adenine_CS"/>
</dbReference>
<dbReference type="InterPro" id="IPR041370">
    <property type="entry name" value="Mlase_EEF1AKMT1/ZCCHC4"/>
</dbReference>
<dbReference type="InterPro" id="IPR039846">
    <property type="entry name" value="ZCCHC4"/>
</dbReference>
<dbReference type="InterPro" id="IPR010666">
    <property type="entry name" value="Znf_GRF"/>
</dbReference>
<dbReference type="PANTHER" id="PTHR13493:SF3">
    <property type="entry name" value="RRNA N6-ADENOSINE-METHYLTRANSFERASE ZCCHC4"/>
    <property type="match status" value="1"/>
</dbReference>
<dbReference type="PANTHER" id="PTHR13493">
    <property type="entry name" value="ZINC FINGER CCHC DOMAIN-CONTAINING"/>
    <property type="match status" value="1"/>
</dbReference>
<dbReference type="Pfam" id="PF10237">
    <property type="entry name" value="N6-adenineMlase"/>
    <property type="match status" value="1"/>
</dbReference>
<dbReference type="Pfam" id="PF06839">
    <property type="entry name" value="Zn_ribbon_GRF"/>
    <property type="match status" value="1"/>
</dbReference>
<dbReference type="PROSITE" id="PS50216">
    <property type="entry name" value="DHHC"/>
    <property type="match status" value="1"/>
</dbReference>
<dbReference type="PROSITE" id="PS00092">
    <property type="entry name" value="N6_MTASE"/>
    <property type="match status" value="1"/>
</dbReference>
<dbReference type="PROSITE" id="PS51999">
    <property type="entry name" value="ZF_GRF"/>
    <property type="match status" value="1"/>
</dbReference>
<comment type="function">
    <text evidence="1">rRNA N6-methyltransferase that specifically methylates the adenine in position 4220 of 28S rRNA. N6-methylation of adenine(4220) in 28S rRNA is required for translation.</text>
</comment>
<comment type="catalytic activity">
    <reaction evidence="1">
        <text>adenosine(4220) in 28S rRNA + S-adenosyl-L-methionine = N(6)-methyladenosine(4220) in 28S rRNA + S-adenosyl-L-homocysteine + H(+)</text>
        <dbReference type="Rhea" id="RHEA:58724"/>
        <dbReference type="Rhea" id="RHEA-COMP:16142"/>
        <dbReference type="Rhea" id="RHEA-COMP:16143"/>
        <dbReference type="ChEBI" id="CHEBI:15378"/>
        <dbReference type="ChEBI" id="CHEBI:57856"/>
        <dbReference type="ChEBI" id="CHEBI:59789"/>
        <dbReference type="ChEBI" id="CHEBI:74411"/>
        <dbReference type="ChEBI" id="CHEBI:74449"/>
    </reaction>
</comment>
<comment type="subunit">
    <text evidence="1">Interacts with components of the ASC-1 complex TRIP4, ASCC1, ASCC2 and ASCC3. Interact with AHCYL1 and AHCYL2. Interact with YTHDC2.</text>
</comment>
<comment type="subcellular location">
    <subcellularLocation>
        <location evidence="1">Cytoplasm</location>
    </subcellularLocation>
    <subcellularLocation>
        <location evidence="1">Nucleus</location>
        <location evidence="1">Nucleolus</location>
    </subcellularLocation>
    <text evidence="1">Accumulates in the nucleolus, where ribosome biogenesis takes place.</text>
</comment>
<comment type="alternative products">
    <event type="alternative splicing"/>
    <isoform>
        <id>Q8BKW4-1</id>
        <name>1</name>
        <sequence type="displayed"/>
    </isoform>
    <isoform>
        <id>Q8BKW4-2</id>
        <name>2</name>
        <sequence type="described" ref="VSP_017013"/>
    </isoform>
</comment>
<comment type="domain">
    <text evidence="1">The regulatory loop blocks the catalytic center by bridging the methyltransferase domain and the C-terminal CCHC-type zinc finger, resulting in an autoinhibitory conformation.</text>
</comment>
<comment type="similarity">
    <text evidence="5">Belongs to the ZCCHC4 family.</text>
</comment>
<name>ZCHC4_MOUSE</name>